<proteinExistence type="inferred from homology"/>
<name>SBT22_ARATH</name>
<evidence type="ECO:0000250" key="1">
    <source>
        <dbReference type="UniProtKB" id="Q39547"/>
    </source>
</evidence>
<evidence type="ECO:0000250" key="2">
    <source>
        <dbReference type="UniProtKB" id="Q84WS0"/>
    </source>
</evidence>
<evidence type="ECO:0000250" key="3">
    <source>
        <dbReference type="UniProtKB" id="Q9MAP7"/>
    </source>
</evidence>
<evidence type="ECO:0000255" key="4"/>
<evidence type="ECO:0000255" key="5">
    <source>
        <dbReference type="PROSITE-ProRule" id="PRU00498"/>
    </source>
</evidence>
<evidence type="ECO:0000255" key="6">
    <source>
        <dbReference type="PROSITE-ProRule" id="PRU01240"/>
    </source>
</evidence>
<evidence type="ECO:0000255" key="7">
    <source>
        <dbReference type="PROSITE-ProRule" id="PRU10082"/>
    </source>
</evidence>
<evidence type="ECO:0000303" key="8">
    <source>
    </source>
</evidence>
<evidence type="ECO:0000305" key="9"/>
<evidence type="ECO:0000312" key="10">
    <source>
        <dbReference type="Araport" id="AT4G20430"/>
    </source>
</evidence>
<evidence type="ECO:0000312" key="11">
    <source>
        <dbReference type="EMBL" id="CAB45809.1"/>
    </source>
</evidence>
<comment type="subcellular location">
    <subcellularLocation>
        <location evidence="2">Secreted</location>
    </subcellularLocation>
</comment>
<comment type="alternative products">
    <event type="alternative splicing"/>
    <isoform>
        <id>Q9SUN6-1</id>
        <name>1</name>
        <sequence type="displayed"/>
    </isoform>
    <isoform>
        <id>Q9SUN6-2</id>
        <name>2</name>
        <sequence type="described" ref="VSP_058024"/>
    </isoform>
</comment>
<comment type="similarity">
    <text evidence="9">Belongs to the peptidase S8 family.</text>
</comment>
<accession>Q9SUN6</accession>
<accession>F4JVJ6</accession>
<protein>
    <recommendedName>
        <fullName evidence="8">Subtilisin-like protease SBT2.2</fullName>
        <ecNumber evidence="7">3.4.21.-</ecNumber>
    </recommendedName>
    <alternativeName>
        <fullName evidence="8">Subtilase subfamily 2 member 2</fullName>
        <shortName evidence="8">AtSBT2.2</shortName>
    </alternativeName>
</protein>
<organism>
    <name type="scientific">Arabidopsis thaliana</name>
    <name type="common">Mouse-ear cress</name>
    <dbReference type="NCBI Taxonomy" id="3702"/>
    <lineage>
        <taxon>Eukaryota</taxon>
        <taxon>Viridiplantae</taxon>
        <taxon>Streptophyta</taxon>
        <taxon>Embryophyta</taxon>
        <taxon>Tracheophyta</taxon>
        <taxon>Spermatophyta</taxon>
        <taxon>Magnoliopsida</taxon>
        <taxon>eudicotyledons</taxon>
        <taxon>Gunneridae</taxon>
        <taxon>Pentapetalae</taxon>
        <taxon>rosids</taxon>
        <taxon>malvids</taxon>
        <taxon>Brassicales</taxon>
        <taxon>Brassicaceae</taxon>
        <taxon>Camelineae</taxon>
        <taxon>Arabidopsis</taxon>
    </lineage>
</organism>
<sequence length="856" mass="91815">MRRVLMVNFGVLLLFCFGVLSNSFGQDNGGDSDINSTTAVYIVTLRQASSLHLFQQEAEEVKRVRDQSKHGDTSKFTRPKLQPRNISRSRYWRSRRSAIAQAHDSLLRNALKGEKYIKLYSFHYLINGFAVFVSSQQAETLSRRREVANIVLDFSVRTATTYTPQFMGLPKGAWVKEGGYETAGEGIVIGFIDTGIDPTHPSFNGTDTSQRQYPIPNHFSGVCEVTPDFPSGSCNRKLVGARHFAQSAITRGIFNSSEDYASPFDGDGHGTHTASIAAGNHGVSAVVSGHNFGSASGIAPRAHISVYKALYKSFGGFAADVVAAIDQAAQDGVDILSLSITPNRRPPGVATFFNPLDMAMLSAVKAGIFVVQAAGNTGPSPKSMSSFSPWIFTVGAASHDRDYSNSIVLGNNVSIPGVGLALRTDEGKKYTMISALDALKNKSSVVDKDMYVGECQDYGSFDKDVIRGNLLICSYSIRFVLGLSTIKQALAVAKNLSAKGVVFYMDPYVLGFQINPTPMDMPGIIIPSAEDSKVLLKYYNSSLVRDGTTKEIVRFGAVAAIAGGQNANFSNRAPKIMYYSARGPDPQDSLFNDADILKPNLVAPGNSIWGAWSSAATESTEFEGESFAMMSGTSMAAPHVAGVAALVKQKFRKFSPSAIASALSTTSVLFDNKGEAIMAQRAYANPDQTISPATPFDMGNGFVNATAALDPGLIFDTSFEDYMSFLCGINGSAPVVFNYTGTNCLRNNATISGSDLNLPSITVSKLNNTRTVQRLMTNIAGNETYTVSLITPFDVLINVSPTQFSIASGETKLLSVILTAKRNSSISSFGGIKLLGNAGHIVRIPVSVTVKIASKQ</sequence>
<dbReference type="EC" id="3.4.21.-" evidence="7"/>
<dbReference type="EMBL" id="AL080253">
    <property type="protein sequence ID" value="CAB45809.1"/>
    <property type="molecule type" value="Genomic_DNA"/>
</dbReference>
<dbReference type="EMBL" id="AL161553">
    <property type="protein sequence ID" value="CAB79043.1"/>
    <property type="molecule type" value="Genomic_DNA"/>
</dbReference>
<dbReference type="EMBL" id="CP002687">
    <property type="protein sequence ID" value="AEE84328.1"/>
    <property type="molecule type" value="Genomic_DNA"/>
</dbReference>
<dbReference type="EMBL" id="CP002687">
    <property type="protein sequence ID" value="AEE84329.1"/>
    <property type="molecule type" value="Genomic_DNA"/>
</dbReference>
<dbReference type="EMBL" id="CP002687">
    <property type="protein sequence ID" value="ANM66822.1"/>
    <property type="molecule type" value="Genomic_DNA"/>
</dbReference>
<dbReference type="PIR" id="T10585">
    <property type="entry name" value="T10585"/>
</dbReference>
<dbReference type="RefSeq" id="NP_001190781.1">
    <molecule id="Q9SUN6-2"/>
    <property type="nucleotide sequence ID" value="NM_001203852.1"/>
</dbReference>
<dbReference type="RefSeq" id="NP_001320010.1">
    <molecule id="Q9SUN6-1"/>
    <property type="nucleotide sequence ID" value="NM_001341438.1"/>
</dbReference>
<dbReference type="RefSeq" id="NP_567601.1">
    <molecule id="Q9SUN6-1"/>
    <property type="nucleotide sequence ID" value="NM_118162.3"/>
</dbReference>
<dbReference type="SMR" id="Q9SUN6"/>
<dbReference type="FunCoup" id="Q9SUN6">
    <property type="interactions" value="49"/>
</dbReference>
<dbReference type="STRING" id="3702.Q9SUN6"/>
<dbReference type="MEROPS" id="S08.A01"/>
<dbReference type="GlyCosmos" id="Q9SUN6">
    <property type="glycosylation" value="16 sites, No reported glycans"/>
</dbReference>
<dbReference type="GlyGen" id="Q9SUN6">
    <property type="glycosylation" value="17 sites"/>
</dbReference>
<dbReference type="PaxDb" id="3702-AT4G20430.1"/>
<dbReference type="ProteomicsDB" id="232931">
    <molecule id="Q9SUN6-1"/>
</dbReference>
<dbReference type="EnsemblPlants" id="AT4G20430.1">
    <molecule id="Q9SUN6-1"/>
    <property type="protein sequence ID" value="AT4G20430.1"/>
    <property type="gene ID" value="AT4G20430"/>
</dbReference>
<dbReference type="EnsemblPlants" id="AT4G20430.2">
    <molecule id="Q9SUN6-2"/>
    <property type="protein sequence ID" value="AT4G20430.2"/>
    <property type="gene ID" value="AT4G20430"/>
</dbReference>
<dbReference type="EnsemblPlants" id="AT4G20430.3">
    <molecule id="Q9SUN6-1"/>
    <property type="protein sequence ID" value="AT4G20430.3"/>
    <property type="gene ID" value="AT4G20430"/>
</dbReference>
<dbReference type="GeneID" id="827791"/>
<dbReference type="Gramene" id="AT4G20430.1">
    <molecule id="Q9SUN6-1"/>
    <property type="protein sequence ID" value="AT4G20430.1"/>
    <property type="gene ID" value="AT4G20430"/>
</dbReference>
<dbReference type="Gramene" id="AT4G20430.2">
    <molecule id="Q9SUN6-2"/>
    <property type="protein sequence ID" value="AT4G20430.2"/>
    <property type="gene ID" value="AT4G20430"/>
</dbReference>
<dbReference type="Gramene" id="AT4G20430.3">
    <molecule id="Q9SUN6-1"/>
    <property type="protein sequence ID" value="AT4G20430.3"/>
    <property type="gene ID" value="AT4G20430"/>
</dbReference>
<dbReference type="KEGG" id="ath:AT4G20430"/>
<dbReference type="Araport" id="AT4G20430"/>
<dbReference type="TAIR" id="AT4G20430"/>
<dbReference type="eggNOG" id="ENOG502QSVR">
    <property type="taxonomic scope" value="Eukaryota"/>
</dbReference>
<dbReference type="InParanoid" id="Q9SUN6"/>
<dbReference type="OMA" id="KSRYWRS"/>
<dbReference type="PhylomeDB" id="Q9SUN6"/>
<dbReference type="PRO" id="PR:Q9SUN6"/>
<dbReference type="Proteomes" id="UP000006548">
    <property type="component" value="Chromosome 4"/>
</dbReference>
<dbReference type="ExpressionAtlas" id="Q9SUN6">
    <property type="expression patterns" value="baseline and differential"/>
</dbReference>
<dbReference type="GO" id="GO:0005576">
    <property type="term" value="C:extracellular region"/>
    <property type="evidence" value="ECO:0007669"/>
    <property type="project" value="UniProtKB-SubCell"/>
</dbReference>
<dbReference type="GO" id="GO:0004252">
    <property type="term" value="F:serine-type endopeptidase activity"/>
    <property type="evidence" value="ECO:0007669"/>
    <property type="project" value="InterPro"/>
</dbReference>
<dbReference type="GO" id="GO:0006508">
    <property type="term" value="P:proteolysis"/>
    <property type="evidence" value="ECO:0007669"/>
    <property type="project" value="UniProtKB-KW"/>
</dbReference>
<dbReference type="CDD" id="cd02120">
    <property type="entry name" value="PA_subtilisin_like"/>
    <property type="match status" value="1"/>
</dbReference>
<dbReference type="CDD" id="cd04852">
    <property type="entry name" value="Peptidases_S8_3"/>
    <property type="match status" value="1"/>
</dbReference>
<dbReference type="FunFam" id="3.40.50.200:FF:000006">
    <property type="entry name" value="Subtilisin-like protease SBT1.5"/>
    <property type="match status" value="1"/>
</dbReference>
<dbReference type="Gene3D" id="2.60.40.2310">
    <property type="match status" value="1"/>
</dbReference>
<dbReference type="Gene3D" id="3.50.30.30">
    <property type="match status" value="1"/>
</dbReference>
<dbReference type="Gene3D" id="3.40.50.200">
    <property type="entry name" value="Peptidase S8/S53 domain"/>
    <property type="match status" value="1"/>
</dbReference>
<dbReference type="InterPro" id="IPR000209">
    <property type="entry name" value="Peptidase_S8/S53_dom"/>
</dbReference>
<dbReference type="InterPro" id="IPR036852">
    <property type="entry name" value="Peptidase_S8/S53_dom_sf"/>
</dbReference>
<dbReference type="InterPro" id="IPR023827">
    <property type="entry name" value="Peptidase_S8_Asp-AS"/>
</dbReference>
<dbReference type="InterPro" id="IPR023828">
    <property type="entry name" value="Peptidase_S8_Ser-AS"/>
</dbReference>
<dbReference type="InterPro" id="IPR015500">
    <property type="entry name" value="Peptidase_S8_subtilisin-rel"/>
</dbReference>
<dbReference type="InterPro" id="IPR034197">
    <property type="entry name" value="Peptidases_S8_3"/>
</dbReference>
<dbReference type="InterPro" id="IPR010259">
    <property type="entry name" value="S8pro/Inhibitor_I9"/>
</dbReference>
<dbReference type="InterPro" id="IPR045051">
    <property type="entry name" value="SBT"/>
</dbReference>
<dbReference type="InterPro" id="IPR041469">
    <property type="entry name" value="Subtilisin-like_FN3"/>
</dbReference>
<dbReference type="PANTHER" id="PTHR10795">
    <property type="entry name" value="PROPROTEIN CONVERTASE SUBTILISIN/KEXIN"/>
    <property type="match status" value="1"/>
</dbReference>
<dbReference type="Pfam" id="PF17766">
    <property type="entry name" value="fn3_6"/>
    <property type="match status" value="1"/>
</dbReference>
<dbReference type="Pfam" id="PF05922">
    <property type="entry name" value="Inhibitor_I9"/>
    <property type="match status" value="1"/>
</dbReference>
<dbReference type="Pfam" id="PF00082">
    <property type="entry name" value="Peptidase_S8"/>
    <property type="match status" value="1"/>
</dbReference>
<dbReference type="PRINTS" id="PR00723">
    <property type="entry name" value="SUBTILISIN"/>
</dbReference>
<dbReference type="SUPFAM" id="SSF52743">
    <property type="entry name" value="Subtilisin-like"/>
    <property type="match status" value="1"/>
</dbReference>
<dbReference type="PROSITE" id="PS51892">
    <property type="entry name" value="SUBTILASE"/>
    <property type="match status" value="1"/>
</dbReference>
<dbReference type="PROSITE" id="PS00136">
    <property type="entry name" value="SUBTILASE_ASP"/>
    <property type="match status" value="1"/>
</dbReference>
<dbReference type="PROSITE" id="PS00138">
    <property type="entry name" value="SUBTILASE_SER"/>
    <property type="match status" value="1"/>
</dbReference>
<keyword id="KW-0025">Alternative splicing</keyword>
<keyword id="KW-0068">Autocatalytic cleavage</keyword>
<keyword id="KW-0325">Glycoprotein</keyword>
<keyword id="KW-0378">Hydrolase</keyword>
<keyword id="KW-0645">Protease</keyword>
<keyword id="KW-1185">Reference proteome</keyword>
<keyword id="KW-0964">Secreted</keyword>
<keyword id="KW-0720">Serine protease</keyword>
<keyword id="KW-0732">Signal</keyword>
<keyword id="KW-0865">Zymogen</keyword>
<reference key="1">
    <citation type="journal article" date="1999" name="Nature">
        <title>Sequence and analysis of chromosome 4 of the plant Arabidopsis thaliana.</title>
        <authorList>
            <person name="Mayer K.F.X."/>
            <person name="Schueller C."/>
            <person name="Wambutt R."/>
            <person name="Murphy G."/>
            <person name="Volckaert G."/>
            <person name="Pohl T."/>
            <person name="Duesterhoeft A."/>
            <person name="Stiekema W."/>
            <person name="Entian K.-D."/>
            <person name="Terryn N."/>
            <person name="Harris B."/>
            <person name="Ansorge W."/>
            <person name="Brandt P."/>
            <person name="Grivell L.A."/>
            <person name="Rieger M."/>
            <person name="Weichselgartner M."/>
            <person name="de Simone V."/>
            <person name="Obermaier B."/>
            <person name="Mache R."/>
            <person name="Mueller M."/>
            <person name="Kreis M."/>
            <person name="Delseny M."/>
            <person name="Puigdomenech P."/>
            <person name="Watson M."/>
            <person name="Schmidtheini T."/>
            <person name="Reichert B."/>
            <person name="Portetelle D."/>
            <person name="Perez-Alonso M."/>
            <person name="Boutry M."/>
            <person name="Bancroft I."/>
            <person name="Vos P."/>
            <person name="Hoheisel J."/>
            <person name="Zimmermann W."/>
            <person name="Wedler H."/>
            <person name="Ridley P."/>
            <person name="Langham S.-A."/>
            <person name="McCullagh B."/>
            <person name="Bilham L."/>
            <person name="Robben J."/>
            <person name="van der Schueren J."/>
            <person name="Grymonprez B."/>
            <person name="Chuang Y.-J."/>
            <person name="Vandenbussche F."/>
            <person name="Braeken M."/>
            <person name="Weltjens I."/>
            <person name="Voet M."/>
            <person name="Bastiaens I."/>
            <person name="Aert R."/>
            <person name="Defoor E."/>
            <person name="Weitzenegger T."/>
            <person name="Bothe G."/>
            <person name="Ramsperger U."/>
            <person name="Hilbert H."/>
            <person name="Braun M."/>
            <person name="Holzer E."/>
            <person name="Brandt A."/>
            <person name="Peters S."/>
            <person name="van Staveren M."/>
            <person name="Dirkse W."/>
            <person name="Mooijman P."/>
            <person name="Klein Lankhorst R."/>
            <person name="Rose M."/>
            <person name="Hauf J."/>
            <person name="Koetter P."/>
            <person name="Berneiser S."/>
            <person name="Hempel S."/>
            <person name="Feldpausch M."/>
            <person name="Lamberth S."/>
            <person name="Van den Daele H."/>
            <person name="De Keyser A."/>
            <person name="Buysshaert C."/>
            <person name="Gielen J."/>
            <person name="Villarroel R."/>
            <person name="De Clercq R."/>
            <person name="van Montagu M."/>
            <person name="Rogers J."/>
            <person name="Cronin A."/>
            <person name="Quail M.A."/>
            <person name="Bray-Allen S."/>
            <person name="Clark L."/>
            <person name="Doggett J."/>
            <person name="Hall S."/>
            <person name="Kay M."/>
            <person name="Lennard N."/>
            <person name="McLay K."/>
            <person name="Mayes R."/>
            <person name="Pettett A."/>
            <person name="Rajandream M.A."/>
            <person name="Lyne M."/>
            <person name="Benes V."/>
            <person name="Rechmann S."/>
            <person name="Borkova D."/>
            <person name="Bloecker H."/>
            <person name="Scharfe M."/>
            <person name="Grimm M."/>
            <person name="Loehnert T.-H."/>
            <person name="Dose S."/>
            <person name="de Haan M."/>
            <person name="Maarse A.C."/>
            <person name="Schaefer M."/>
            <person name="Mueller-Auer S."/>
            <person name="Gabel C."/>
            <person name="Fuchs M."/>
            <person name="Fartmann B."/>
            <person name="Granderath K."/>
            <person name="Dauner D."/>
            <person name="Herzl A."/>
            <person name="Neumann S."/>
            <person name="Argiriou A."/>
            <person name="Vitale D."/>
            <person name="Liguori R."/>
            <person name="Piravandi E."/>
            <person name="Massenet O."/>
            <person name="Quigley F."/>
            <person name="Clabauld G."/>
            <person name="Muendlein A."/>
            <person name="Felber R."/>
            <person name="Schnabl S."/>
            <person name="Hiller R."/>
            <person name="Schmidt W."/>
            <person name="Lecharny A."/>
            <person name="Aubourg S."/>
            <person name="Chefdor F."/>
            <person name="Cooke R."/>
            <person name="Berger C."/>
            <person name="Monfort A."/>
            <person name="Casacuberta E."/>
            <person name="Gibbons T."/>
            <person name="Weber N."/>
            <person name="Vandenbol M."/>
            <person name="Bargues M."/>
            <person name="Terol J."/>
            <person name="Torres A."/>
            <person name="Perez-Perez A."/>
            <person name="Purnelle B."/>
            <person name="Bent E."/>
            <person name="Johnson S."/>
            <person name="Tacon D."/>
            <person name="Jesse T."/>
            <person name="Heijnen L."/>
            <person name="Schwarz S."/>
            <person name="Scholler P."/>
            <person name="Heber S."/>
            <person name="Francs P."/>
            <person name="Bielke C."/>
            <person name="Frishman D."/>
            <person name="Haase D."/>
            <person name="Lemcke K."/>
            <person name="Mewes H.-W."/>
            <person name="Stocker S."/>
            <person name="Zaccaria P."/>
            <person name="Bevan M."/>
            <person name="Wilson R.K."/>
            <person name="de la Bastide M."/>
            <person name="Habermann K."/>
            <person name="Parnell L."/>
            <person name="Dedhia N."/>
            <person name="Gnoj L."/>
            <person name="Schutz K."/>
            <person name="Huang E."/>
            <person name="Spiegel L."/>
            <person name="Sekhon M."/>
            <person name="Murray J."/>
            <person name="Sheet P."/>
            <person name="Cordes M."/>
            <person name="Abu-Threideh J."/>
            <person name="Stoneking T."/>
            <person name="Kalicki J."/>
            <person name="Graves T."/>
            <person name="Harmon G."/>
            <person name="Edwards J."/>
            <person name="Latreille P."/>
            <person name="Courtney L."/>
            <person name="Cloud J."/>
            <person name="Abbott A."/>
            <person name="Scott K."/>
            <person name="Johnson D."/>
            <person name="Minx P."/>
            <person name="Bentley D."/>
            <person name="Fulton B."/>
            <person name="Miller N."/>
            <person name="Greco T."/>
            <person name="Kemp K."/>
            <person name="Kramer J."/>
            <person name="Fulton L."/>
            <person name="Mardis E."/>
            <person name="Dante M."/>
            <person name="Pepin K."/>
            <person name="Hillier L.W."/>
            <person name="Nelson J."/>
            <person name="Spieth J."/>
            <person name="Ryan E."/>
            <person name="Andrews S."/>
            <person name="Geisel C."/>
            <person name="Layman D."/>
            <person name="Du H."/>
            <person name="Ali J."/>
            <person name="Berghoff A."/>
            <person name="Jones K."/>
            <person name="Drone K."/>
            <person name="Cotton M."/>
            <person name="Joshu C."/>
            <person name="Antonoiu B."/>
            <person name="Zidanic M."/>
            <person name="Strong C."/>
            <person name="Sun H."/>
            <person name="Lamar B."/>
            <person name="Yordan C."/>
            <person name="Ma P."/>
            <person name="Zhong J."/>
            <person name="Preston R."/>
            <person name="Vil D."/>
            <person name="Shekher M."/>
            <person name="Matero A."/>
            <person name="Shah R."/>
            <person name="Swaby I.K."/>
            <person name="O'Shaughnessy A."/>
            <person name="Rodriguez M."/>
            <person name="Hoffman J."/>
            <person name="Till S."/>
            <person name="Granat S."/>
            <person name="Shohdy N."/>
            <person name="Hasegawa A."/>
            <person name="Hameed A."/>
            <person name="Lodhi M."/>
            <person name="Johnson A."/>
            <person name="Chen E."/>
            <person name="Marra M.A."/>
            <person name="Martienssen R."/>
            <person name="McCombie W.R."/>
        </authorList>
    </citation>
    <scope>NUCLEOTIDE SEQUENCE [LARGE SCALE GENOMIC DNA]</scope>
    <source>
        <strain>cv. Columbia</strain>
    </source>
</reference>
<reference key="2">
    <citation type="journal article" date="2017" name="Plant J.">
        <title>Araport11: a complete reannotation of the Arabidopsis thaliana reference genome.</title>
        <authorList>
            <person name="Cheng C.Y."/>
            <person name="Krishnakumar V."/>
            <person name="Chan A.P."/>
            <person name="Thibaud-Nissen F."/>
            <person name="Schobel S."/>
            <person name="Town C.D."/>
        </authorList>
    </citation>
    <scope>GENOME REANNOTATION</scope>
    <source>
        <strain>cv. Columbia</strain>
    </source>
</reference>
<reference key="3">
    <citation type="journal article" date="2005" name="PLoS Comput. Biol.">
        <title>Inferring hypotheses on functional relationships of genes: Analysis of the Arabidopsis thaliana subtilase gene family.</title>
        <authorList>
            <person name="Rautengarten C."/>
            <person name="Steinhauser D."/>
            <person name="Bussis D."/>
            <person name="Stintzi A."/>
            <person name="Schaller A."/>
            <person name="Kopka J."/>
            <person name="Altmann T."/>
        </authorList>
    </citation>
    <scope>GENE FAMILY</scope>
    <scope>NOMENCLATURE</scope>
</reference>
<feature type="signal peptide" evidence="4">
    <location>
        <begin position="1"/>
        <end position="21"/>
    </location>
</feature>
<feature type="propeptide" id="PRO_0000435182" description="Activation peptide" evidence="3">
    <location>
        <begin position="22"/>
        <end position="159"/>
    </location>
</feature>
<feature type="chain" id="PRO_5004337287" description="Subtilisin-like protease SBT2.2">
    <location>
        <begin position="160"/>
        <end status="unknown"/>
    </location>
</feature>
<feature type="propeptide" id="PRO_0000435183" evidence="1">
    <location>
        <begin status="unknown"/>
        <end position="856"/>
    </location>
</feature>
<feature type="domain" description="Inhibitor I9" evidence="4">
    <location>
        <begin position="40"/>
        <end position="159"/>
    </location>
</feature>
<feature type="domain" description="Peptidase S8" evidence="6">
    <location>
        <begin position="164"/>
        <end position="709"/>
    </location>
</feature>
<feature type="domain" description="PA" evidence="4">
    <location>
        <begin position="432"/>
        <end position="528"/>
    </location>
</feature>
<feature type="active site" description="Charge relay system" evidence="6">
    <location>
        <position position="193"/>
    </location>
</feature>
<feature type="active site" description="Charge relay system" evidence="6">
    <location>
        <position position="269"/>
    </location>
</feature>
<feature type="active site" description="Charge relay system" evidence="6">
    <location>
        <position position="634"/>
    </location>
</feature>
<feature type="glycosylation site" description="N-linked (GlcNAc...) asparagine" evidence="5">
    <location>
        <position position="35"/>
    </location>
</feature>
<feature type="glycosylation site" description="N-linked (GlcNAc...) asparagine" evidence="5">
    <location>
        <position position="85"/>
    </location>
</feature>
<feature type="glycosylation site" description="N-linked (GlcNAc...) asparagine" evidence="5">
    <location>
        <position position="204"/>
    </location>
</feature>
<feature type="glycosylation site" description="N-linked (GlcNAc...) asparagine" evidence="5">
    <location>
        <position position="255"/>
    </location>
</feature>
<feature type="glycosylation site" description="N-linked (GlcNAc...) asparagine" evidence="5">
    <location>
        <position position="412"/>
    </location>
</feature>
<feature type="glycosylation site" description="N-linked (GlcNAc...) asparagine" evidence="5">
    <location>
        <position position="441"/>
    </location>
</feature>
<feature type="glycosylation site" description="N-linked (GlcNAc...) asparagine" evidence="5">
    <location>
        <position position="495"/>
    </location>
</feature>
<feature type="glycosylation site" description="N-linked (GlcNAc...) asparagine" evidence="5">
    <location>
        <position position="540"/>
    </location>
</feature>
<feature type="glycosylation site" description="N-linked (GlcNAc...) asparagine" evidence="5">
    <location>
        <position position="568"/>
    </location>
</feature>
<feature type="glycosylation site" description="N-linked (GlcNAc...) asparagine" evidence="5">
    <location>
        <position position="704"/>
    </location>
</feature>
<feature type="glycosylation site" description="N-linked (GlcNAc...) asparagine" evidence="5">
    <location>
        <position position="730"/>
    </location>
</feature>
<feature type="glycosylation site" description="N-linked (GlcNAc...) asparagine" evidence="5">
    <location>
        <position position="738"/>
    </location>
</feature>
<feature type="glycosylation site" description="N-linked (GlcNAc...) asparagine" evidence="5">
    <location>
        <position position="748"/>
    </location>
</feature>
<feature type="glycosylation site" description="N-linked (GlcNAc...) asparagine" evidence="5">
    <location>
        <position position="767"/>
    </location>
</feature>
<feature type="glycosylation site" description="N-linked (GlcNAc...) asparagine" evidence="5">
    <location>
        <position position="782"/>
    </location>
</feature>
<feature type="glycosylation site" description="N-linked (GlcNAc...) asparagine" evidence="5">
    <location>
        <position position="823"/>
    </location>
</feature>
<feature type="splice variant" id="VSP_058024" description="In isoform 2.">
    <original>MYVGECQDYGSFDKDVIRGNLLICS</original>
    <variation>I</variation>
    <location>
        <begin position="450"/>
        <end position="474"/>
    </location>
</feature>
<gene>
    <name evidence="8" type="primary">SBT2.2</name>
    <name evidence="10" type="ordered locus">At4g20430</name>
    <name evidence="11" type="ORF">F9F13.80</name>
</gene>